<feature type="chain" id="PRO_1000055427" description="Large ribosomal subunit protein uL13">
    <location>
        <begin position="1"/>
        <end position="148"/>
    </location>
</feature>
<sequence>MRSTFLAKPHEIQRNWYIVDATDVPLGRLSSVVATVLRGKNKPTFTPSVDTGDFVIVINADKVQLTGKKATDKTYYHHSGYPGGLKARKAGTLREKNPKKLIELSVQGMLPKNTLGRAQGLKLHVYASGEEVGQSAQKPQVLNIKDLL</sequence>
<accession>Q04G52</accession>
<proteinExistence type="inferred from homology"/>
<protein>
    <recommendedName>
        <fullName evidence="1">Large ribosomal subunit protein uL13</fullName>
    </recommendedName>
    <alternativeName>
        <fullName evidence="2">50S ribosomal protein L13</fullName>
    </alternativeName>
</protein>
<reference key="1">
    <citation type="journal article" date="2006" name="Proc. Natl. Acad. Sci. U.S.A.">
        <title>Comparative genomics of the lactic acid bacteria.</title>
        <authorList>
            <person name="Makarova K.S."/>
            <person name="Slesarev A."/>
            <person name="Wolf Y.I."/>
            <person name="Sorokin A."/>
            <person name="Mirkin B."/>
            <person name="Koonin E.V."/>
            <person name="Pavlov A."/>
            <person name="Pavlova N."/>
            <person name="Karamychev V."/>
            <person name="Polouchine N."/>
            <person name="Shakhova V."/>
            <person name="Grigoriev I."/>
            <person name="Lou Y."/>
            <person name="Rohksar D."/>
            <person name="Lucas S."/>
            <person name="Huang K."/>
            <person name="Goodstein D.M."/>
            <person name="Hawkins T."/>
            <person name="Plengvidhya V."/>
            <person name="Welker D."/>
            <person name="Hughes J."/>
            <person name="Goh Y."/>
            <person name="Benson A."/>
            <person name="Baldwin K."/>
            <person name="Lee J.-H."/>
            <person name="Diaz-Muniz I."/>
            <person name="Dosti B."/>
            <person name="Smeianov V."/>
            <person name="Wechter W."/>
            <person name="Barabote R."/>
            <person name="Lorca G."/>
            <person name="Altermann E."/>
            <person name="Barrangou R."/>
            <person name="Ganesan B."/>
            <person name="Xie Y."/>
            <person name="Rawsthorne H."/>
            <person name="Tamir D."/>
            <person name="Parker C."/>
            <person name="Breidt F."/>
            <person name="Broadbent J.R."/>
            <person name="Hutkins R."/>
            <person name="O'Sullivan D."/>
            <person name="Steele J."/>
            <person name="Unlu G."/>
            <person name="Saier M.H. Jr."/>
            <person name="Klaenhammer T."/>
            <person name="Richardson P."/>
            <person name="Kozyavkin S."/>
            <person name="Weimer B.C."/>
            <person name="Mills D.A."/>
        </authorList>
    </citation>
    <scope>NUCLEOTIDE SEQUENCE [LARGE SCALE GENOMIC DNA]</scope>
    <source>
        <strain>ATCC BAA-331 / PSU-1</strain>
    </source>
</reference>
<organism>
    <name type="scientific">Oenococcus oeni (strain ATCC BAA-331 / PSU-1)</name>
    <dbReference type="NCBI Taxonomy" id="203123"/>
    <lineage>
        <taxon>Bacteria</taxon>
        <taxon>Bacillati</taxon>
        <taxon>Bacillota</taxon>
        <taxon>Bacilli</taxon>
        <taxon>Lactobacillales</taxon>
        <taxon>Lactobacillaceae</taxon>
        <taxon>Oenococcus</taxon>
    </lineage>
</organism>
<comment type="function">
    <text evidence="1">This protein is one of the early assembly proteins of the 50S ribosomal subunit, although it is not seen to bind rRNA by itself. It is important during the early stages of 50S assembly.</text>
</comment>
<comment type="subunit">
    <text evidence="1">Part of the 50S ribosomal subunit.</text>
</comment>
<comment type="similarity">
    <text evidence="1">Belongs to the universal ribosomal protein uL13 family.</text>
</comment>
<dbReference type="EMBL" id="CP000411">
    <property type="protein sequence ID" value="ABJ56570.1"/>
    <property type="molecule type" value="Genomic_DNA"/>
</dbReference>
<dbReference type="RefSeq" id="WP_002818489.1">
    <property type="nucleotide sequence ID" value="NC_008528.1"/>
</dbReference>
<dbReference type="SMR" id="Q04G52"/>
<dbReference type="STRING" id="203123.OEOE_0628"/>
<dbReference type="GeneID" id="75065449"/>
<dbReference type="KEGG" id="ooe:OEOE_0628"/>
<dbReference type="eggNOG" id="COG0102">
    <property type="taxonomic scope" value="Bacteria"/>
</dbReference>
<dbReference type="HOGENOM" id="CLU_082184_2_2_9"/>
<dbReference type="Proteomes" id="UP000000774">
    <property type="component" value="Chromosome"/>
</dbReference>
<dbReference type="GO" id="GO:0022625">
    <property type="term" value="C:cytosolic large ribosomal subunit"/>
    <property type="evidence" value="ECO:0007669"/>
    <property type="project" value="TreeGrafter"/>
</dbReference>
<dbReference type="GO" id="GO:0003729">
    <property type="term" value="F:mRNA binding"/>
    <property type="evidence" value="ECO:0007669"/>
    <property type="project" value="TreeGrafter"/>
</dbReference>
<dbReference type="GO" id="GO:0003735">
    <property type="term" value="F:structural constituent of ribosome"/>
    <property type="evidence" value="ECO:0007669"/>
    <property type="project" value="InterPro"/>
</dbReference>
<dbReference type="GO" id="GO:0017148">
    <property type="term" value="P:negative regulation of translation"/>
    <property type="evidence" value="ECO:0007669"/>
    <property type="project" value="TreeGrafter"/>
</dbReference>
<dbReference type="GO" id="GO:0006412">
    <property type="term" value="P:translation"/>
    <property type="evidence" value="ECO:0007669"/>
    <property type="project" value="UniProtKB-UniRule"/>
</dbReference>
<dbReference type="CDD" id="cd00392">
    <property type="entry name" value="Ribosomal_L13"/>
    <property type="match status" value="1"/>
</dbReference>
<dbReference type="FunFam" id="3.90.1180.10:FF:000001">
    <property type="entry name" value="50S ribosomal protein L13"/>
    <property type="match status" value="1"/>
</dbReference>
<dbReference type="Gene3D" id="3.90.1180.10">
    <property type="entry name" value="Ribosomal protein L13"/>
    <property type="match status" value="1"/>
</dbReference>
<dbReference type="HAMAP" id="MF_01366">
    <property type="entry name" value="Ribosomal_uL13"/>
    <property type="match status" value="1"/>
</dbReference>
<dbReference type="InterPro" id="IPR005822">
    <property type="entry name" value="Ribosomal_uL13"/>
</dbReference>
<dbReference type="InterPro" id="IPR005823">
    <property type="entry name" value="Ribosomal_uL13_bac-type"/>
</dbReference>
<dbReference type="InterPro" id="IPR036899">
    <property type="entry name" value="Ribosomal_uL13_sf"/>
</dbReference>
<dbReference type="NCBIfam" id="TIGR01066">
    <property type="entry name" value="rplM_bact"/>
    <property type="match status" value="1"/>
</dbReference>
<dbReference type="PANTHER" id="PTHR11545:SF2">
    <property type="entry name" value="LARGE RIBOSOMAL SUBUNIT PROTEIN UL13M"/>
    <property type="match status" value="1"/>
</dbReference>
<dbReference type="PANTHER" id="PTHR11545">
    <property type="entry name" value="RIBOSOMAL PROTEIN L13"/>
    <property type="match status" value="1"/>
</dbReference>
<dbReference type="Pfam" id="PF00572">
    <property type="entry name" value="Ribosomal_L13"/>
    <property type="match status" value="1"/>
</dbReference>
<dbReference type="PIRSF" id="PIRSF002181">
    <property type="entry name" value="Ribosomal_L13"/>
    <property type="match status" value="1"/>
</dbReference>
<dbReference type="SUPFAM" id="SSF52161">
    <property type="entry name" value="Ribosomal protein L13"/>
    <property type="match status" value="1"/>
</dbReference>
<keyword id="KW-1185">Reference proteome</keyword>
<keyword id="KW-0687">Ribonucleoprotein</keyword>
<keyword id="KW-0689">Ribosomal protein</keyword>
<gene>
    <name evidence="1" type="primary">rplM</name>
    <name type="ordered locus">OEOE_0628</name>
</gene>
<name>RL13_OENOB</name>
<evidence type="ECO:0000255" key="1">
    <source>
        <dbReference type="HAMAP-Rule" id="MF_01366"/>
    </source>
</evidence>
<evidence type="ECO:0000305" key="2"/>